<feature type="signal peptide" evidence="1">
    <location>
        <begin position="1"/>
        <end position="21"/>
    </location>
</feature>
<feature type="chain" id="PRO_0000035419" description="Candiduxin-2">
    <location>
        <begin position="22"/>
        <end position="86"/>
    </location>
</feature>
<feature type="disulfide bond" evidence="2">
    <location>
        <begin position="24"/>
        <end position="45"/>
    </location>
</feature>
<feature type="disulfide bond" evidence="2">
    <location>
        <begin position="38"/>
        <end position="62"/>
    </location>
</feature>
<feature type="disulfide bond" evidence="2">
    <location>
        <begin position="66"/>
        <end position="78"/>
    </location>
</feature>
<feature type="disulfide bond" evidence="2">
    <location>
        <begin position="79"/>
        <end position="84"/>
    </location>
</feature>
<dbReference type="EMBL" id="AY057876">
    <property type="protein sequence ID" value="AAL30058.1"/>
    <property type="molecule type" value="mRNA"/>
</dbReference>
<dbReference type="SMR" id="Q8AY52"/>
<dbReference type="GO" id="GO:0005576">
    <property type="term" value="C:extracellular region"/>
    <property type="evidence" value="ECO:0007669"/>
    <property type="project" value="UniProtKB-SubCell"/>
</dbReference>
<dbReference type="GO" id="GO:0090729">
    <property type="term" value="F:toxin activity"/>
    <property type="evidence" value="ECO:0007669"/>
    <property type="project" value="UniProtKB-KW"/>
</dbReference>
<dbReference type="CDD" id="cd00206">
    <property type="entry name" value="TFP_snake_toxin"/>
    <property type="match status" value="1"/>
</dbReference>
<dbReference type="Gene3D" id="2.10.60.10">
    <property type="entry name" value="CD59"/>
    <property type="match status" value="1"/>
</dbReference>
<dbReference type="InterPro" id="IPR003571">
    <property type="entry name" value="Snake_3FTx"/>
</dbReference>
<dbReference type="InterPro" id="IPR045860">
    <property type="entry name" value="Snake_toxin-like_sf"/>
</dbReference>
<dbReference type="InterPro" id="IPR018354">
    <property type="entry name" value="Snake_toxin_con_site"/>
</dbReference>
<dbReference type="InterPro" id="IPR054131">
    <property type="entry name" value="Toxin_cobra-type"/>
</dbReference>
<dbReference type="Pfam" id="PF21947">
    <property type="entry name" value="Toxin_cobra-type"/>
    <property type="match status" value="1"/>
</dbReference>
<dbReference type="SUPFAM" id="SSF57302">
    <property type="entry name" value="Snake toxin-like"/>
    <property type="match status" value="1"/>
</dbReference>
<dbReference type="PROSITE" id="PS00272">
    <property type="entry name" value="SNAKE_TOXIN"/>
    <property type="match status" value="1"/>
</dbReference>
<sequence>MKTLLLTLVVLTIACLDLGYTKTCFNDNLANPKTTELCRHSMYFCFKNSWIAGGVERIERGCSLTCPDIKYNGKYIYCCTRDNCNA</sequence>
<accession>Q8AY52</accession>
<proteinExistence type="inferred from homology"/>
<reference key="1">
    <citation type="submission" date="2001-10" db="EMBL/GenBank/DDBJ databases">
        <title>Structural and functional genomics of Bungarus candidus.</title>
        <authorList>
            <person name="Tsai I.H."/>
            <person name="Wang Y.M."/>
            <person name="Hsu H.Y."/>
        </authorList>
    </citation>
    <scope>NUCLEOTIDE SEQUENCE [MRNA]</scope>
    <source>
        <tissue>Venom gland</tissue>
    </source>
</reference>
<comment type="subcellular location">
    <subcellularLocation>
        <location evidence="1">Secreted</location>
    </subcellularLocation>
</comment>
<comment type="tissue specificity">
    <text evidence="3">Expressed by the venom gland.</text>
</comment>
<comment type="similarity">
    <text evidence="3">Belongs to the three-finger toxin family. Short-chain subfamily. Orphan group IX sub-subfamily.</text>
</comment>
<organism>
    <name type="scientific">Bungarus candidus</name>
    <name type="common">Malayan krait</name>
    <dbReference type="NCBI Taxonomy" id="92438"/>
    <lineage>
        <taxon>Eukaryota</taxon>
        <taxon>Metazoa</taxon>
        <taxon>Chordata</taxon>
        <taxon>Craniata</taxon>
        <taxon>Vertebrata</taxon>
        <taxon>Euteleostomi</taxon>
        <taxon>Lepidosauria</taxon>
        <taxon>Squamata</taxon>
        <taxon>Bifurcata</taxon>
        <taxon>Unidentata</taxon>
        <taxon>Episquamata</taxon>
        <taxon>Toxicofera</taxon>
        <taxon>Serpentes</taxon>
        <taxon>Colubroidea</taxon>
        <taxon>Elapidae</taxon>
        <taxon>Bungarinae</taxon>
        <taxon>Bungarus</taxon>
    </lineage>
</organism>
<protein>
    <recommendedName>
        <fullName>Candiduxin-2</fullName>
    </recommendedName>
</protein>
<keyword id="KW-1015">Disulfide bond</keyword>
<keyword id="KW-0964">Secreted</keyword>
<keyword id="KW-0732">Signal</keyword>
<keyword id="KW-0800">Toxin</keyword>
<evidence type="ECO:0000250" key="1"/>
<evidence type="ECO:0000250" key="2">
    <source>
        <dbReference type="UniProtKB" id="P60301"/>
    </source>
</evidence>
<evidence type="ECO:0000305" key="3"/>
<name>3SO92_BUNCA</name>